<comment type="function">
    <text evidence="1">Catalyzes a reversible aldol reaction between acetaldehyde and D-glyceraldehyde 3-phosphate to generate 2-deoxy-D-ribose 5-phosphate.</text>
</comment>
<comment type="catalytic activity">
    <reaction evidence="1">
        <text>2-deoxy-D-ribose 5-phosphate = D-glyceraldehyde 3-phosphate + acetaldehyde</text>
        <dbReference type="Rhea" id="RHEA:12821"/>
        <dbReference type="ChEBI" id="CHEBI:15343"/>
        <dbReference type="ChEBI" id="CHEBI:59776"/>
        <dbReference type="ChEBI" id="CHEBI:62877"/>
        <dbReference type="EC" id="4.1.2.4"/>
    </reaction>
</comment>
<comment type="pathway">
    <text evidence="1">Carbohydrate degradation; 2-deoxy-D-ribose 1-phosphate degradation; D-glyceraldehyde 3-phosphate and acetaldehyde from 2-deoxy-alpha-D-ribose 1-phosphate: step 2/2.</text>
</comment>
<comment type="subcellular location">
    <subcellularLocation>
        <location evidence="1">Cytoplasm</location>
    </subcellularLocation>
</comment>
<comment type="similarity">
    <text evidence="1">Belongs to the DeoC/FbaB aldolase family. DeoC type 1 subfamily.</text>
</comment>
<evidence type="ECO:0000255" key="1">
    <source>
        <dbReference type="HAMAP-Rule" id="MF_00114"/>
    </source>
</evidence>
<organism>
    <name type="scientific">Vibrio vulnificus (strain YJ016)</name>
    <dbReference type="NCBI Taxonomy" id="196600"/>
    <lineage>
        <taxon>Bacteria</taxon>
        <taxon>Pseudomonadati</taxon>
        <taxon>Pseudomonadota</taxon>
        <taxon>Gammaproteobacteria</taxon>
        <taxon>Vibrionales</taxon>
        <taxon>Vibrionaceae</taxon>
        <taxon>Vibrio</taxon>
    </lineage>
</organism>
<dbReference type="EC" id="4.1.2.4" evidence="1"/>
<dbReference type="EMBL" id="BA000037">
    <property type="protein sequence ID" value="BAC93291.1"/>
    <property type="molecule type" value="Genomic_DNA"/>
</dbReference>
<dbReference type="SMR" id="Q7MP37"/>
<dbReference type="KEGG" id="vvy:VV0527"/>
<dbReference type="PATRIC" id="fig|196600.6.peg.549"/>
<dbReference type="HOGENOM" id="CLU_053595_0_1_6"/>
<dbReference type="UniPathway" id="UPA00002">
    <property type="reaction ID" value="UER00468"/>
</dbReference>
<dbReference type="Proteomes" id="UP000002675">
    <property type="component" value="Chromosome I"/>
</dbReference>
<dbReference type="GO" id="GO:0005737">
    <property type="term" value="C:cytoplasm"/>
    <property type="evidence" value="ECO:0007669"/>
    <property type="project" value="UniProtKB-SubCell"/>
</dbReference>
<dbReference type="GO" id="GO:0004139">
    <property type="term" value="F:deoxyribose-phosphate aldolase activity"/>
    <property type="evidence" value="ECO:0007669"/>
    <property type="project" value="UniProtKB-UniRule"/>
</dbReference>
<dbReference type="GO" id="GO:0006018">
    <property type="term" value="P:2-deoxyribose 1-phosphate catabolic process"/>
    <property type="evidence" value="ECO:0007669"/>
    <property type="project" value="UniProtKB-UniRule"/>
</dbReference>
<dbReference type="GO" id="GO:0016052">
    <property type="term" value="P:carbohydrate catabolic process"/>
    <property type="evidence" value="ECO:0007669"/>
    <property type="project" value="TreeGrafter"/>
</dbReference>
<dbReference type="GO" id="GO:0009264">
    <property type="term" value="P:deoxyribonucleotide catabolic process"/>
    <property type="evidence" value="ECO:0007669"/>
    <property type="project" value="InterPro"/>
</dbReference>
<dbReference type="CDD" id="cd00959">
    <property type="entry name" value="DeoC"/>
    <property type="match status" value="1"/>
</dbReference>
<dbReference type="FunFam" id="3.20.20.70:FF:000044">
    <property type="entry name" value="Deoxyribose-phosphate aldolase"/>
    <property type="match status" value="1"/>
</dbReference>
<dbReference type="Gene3D" id="3.20.20.70">
    <property type="entry name" value="Aldolase class I"/>
    <property type="match status" value="1"/>
</dbReference>
<dbReference type="HAMAP" id="MF_00114">
    <property type="entry name" value="DeoC_type1"/>
    <property type="match status" value="1"/>
</dbReference>
<dbReference type="InterPro" id="IPR013785">
    <property type="entry name" value="Aldolase_TIM"/>
</dbReference>
<dbReference type="InterPro" id="IPR011343">
    <property type="entry name" value="DeoC"/>
</dbReference>
<dbReference type="InterPro" id="IPR002915">
    <property type="entry name" value="DeoC/FbaB/LacD_aldolase"/>
</dbReference>
<dbReference type="InterPro" id="IPR028581">
    <property type="entry name" value="DeoC_typeI"/>
</dbReference>
<dbReference type="NCBIfam" id="TIGR00126">
    <property type="entry name" value="deoC"/>
    <property type="match status" value="1"/>
</dbReference>
<dbReference type="PANTHER" id="PTHR10889">
    <property type="entry name" value="DEOXYRIBOSE-PHOSPHATE ALDOLASE"/>
    <property type="match status" value="1"/>
</dbReference>
<dbReference type="PANTHER" id="PTHR10889:SF1">
    <property type="entry name" value="DEOXYRIBOSE-PHOSPHATE ALDOLASE"/>
    <property type="match status" value="1"/>
</dbReference>
<dbReference type="Pfam" id="PF01791">
    <property type="entry name" value="DeoC"/>
    <property type="match status" value="1"/>
</dbReference>
<dbReference type="PIRSF" id="PIRSF001357">
    <property type="entry name" value="DeoC"/>
    <property type="match status" value="1"/>
</dbReference>
<dbReference type="SMART" id="SM01133">
    <property type="entry name" value="DeoC"/>
    <property type="match status" value="1"/>
</dbReference>
<dbReference type="SUPFAM" id="SSF51569">
    <property type="entry name" value="Aldolase"/>
    <property type="match status" value="1"/>
</dbReference>
<gene>
    <name evidence="1" type="primary">deoC1</name>
    <name type="ordered locus">VV0527</name>
</gene>
<reference key="1">
    <citation type="journal article" date="2003" name="Genome Res.">
        <title>Comparative genome analysis of Vibrio vulnificus, a marine pathogen.</title>
        <authorList>
            <person name="Chen C.-Y."/>
            <person name="Wu K.-M."/>
            <person name="Chang Y.-C."/>
            <person name="Chang C.-H."/>
            <person name="Tsai H.-C."/>
            <person name="Liao T.-L."/>
            <person name="Liu Y.-M."/>
            <person name="Chen H.-J."/>
            <person name="Shen A.B.-T."/>
            <person name="Li J.-C."/>
            <person name="Su T.-L."/>
            <person name="Shao C.-P."/>
            <person name="Lee C.-T."/>
            <person name="Hor L.-I."/>
            <person name="Tsai S.-F."/>
        </authorList>
    </citation>
    <scope>NUCLEOTIDE SEQUENCE [LARGE SCALE GENOMIC DNA]</scope>
    <source>
        <strain>YJ016</strain>
    </source>
</reference>
<accession>Q7MP37</accession>
<name>DEOC1_VIBVY</name>
<feature type="chain" id="PRO_0000057284" description="Deoxyribose-phosphate aldolase 1">
    <location>
        <begin position="1"/>
        <end position="219"/>
    </location>
</feature>
<feature type="active site" description="Proton donor/acceptor" evidence="1">
    <location>
        <position position="87"/>
    </location>
</feature>
<feature type="active site" description="Schiff-base intermediate with acetaldehyde" evidence="1">
    <location>
        <position position="149"/>
    </location>
</feature>
<feature type="active site" description="Proton donor/acceptor" evidence="1">
    <location>
        <position position="178"/>
    </location>
</feature>
<protein>
    <recommendedName>
        <fullName evidence="1">Deoxyribose-phosphate aldolase 1</fullName>
        <shortName evidence="1">DERA 1</shortName>
        <ecNumber evidence="1">4.1.2.4</ecNumber>
    </recommendedName>
    <alternativeName>
        <fullName evidence="1">2-deoxy-D-ribose 5-phosphate aldolase 1</fullName>
    </alternativeName>
    <alternativeName>
        <fullName evidence="1">Phosphodeoxyriboaldolase 1</fullName>
        <shortName evidence="1">Deoxyriboaldolase 1</shortName>
    </alternativeName>
</protein>
<proteinExistence type="inferred from homology"/>
<keyword id="KW-0963">Cytoplasm</keyword>
<keyword id="KW-0456">Lyase</keyword>
<keyword id="KW-0704">Schiff base</keyword>
<sequence length="219" mass="23433">MNHYIDHTLLLANATTKQINTLCDEAHEHQFFSVCINPDFVEHCAERLNTSNVKICTVIGFPLGANTTAVKVFETQNAISLGADEIDMVVNISDVLDGKWDVIEKEIVAIKEACGPKLLKVIFETCLLTNEQIVKLCNISKRAGADFVKTSTGFSTGGATVEHIKLMRDTVGKQMGVKASGGVRTKETAQAMIDAGASRVGASASVSIVTGEAPTTNGY</sequence>